<protein>
    <recommendedName>
        <fullName>Turripeptide OL135</fullName>
    </recommendedName>
</protein>
<evidence type="ECO:0000250" key="1"/>
<evidence type="ECO:0000255" key="2"/>
<evidence type="ECO:0000305" key="3"/>
<accession>P0DKN0</accession>
<name>TU135_IOTOL</name>
<proteinExistence type="evidence at transcript level"/>
<feature type="signal peptide" evidence="2">
    <location>
        <begin position="1"/>
        <end position="20"/>
    </location>
</feature>
<feature type="propeptide" id="PRO_0000419844" evidence="2">
    <location>
        <begin position="21"/>
        <end position="28"/>
    </location>
</feature>
<feature type="chain" id="PRO_0000419845" description="Turripeptide OL135">
    <location>
        <begin position="29"/>
        <end position="74"/>
    </location>
</feature>
<keyword id="KW-1015">Disulfide bond</keyword>
<keyword id="KW-0872">Ion channel impairing toxin</keyword>
<keyword id="KW-0528">Neurotoxin</keyword>
<keyword id="KW-0964">Secreted</keyword>
<keyword id="KW-0732">Signal</keyword>
<keyword id="KW-0800">Toxin</keyword>
<comment type="function">
    <text evidence="1">Acts as a neurotoxin by inhibiting an ion channel.</text>
</comment>
<comment type="subcellular location">
    <subcellularLocation>
        <location evidence="1">Secreted</location>
    </subcellularLocation>
</comment>
<comment type="tissue specificity">
    <text>Expressed by the venom duct.</text>
</comment>
<comment type="domain">
    <text>The cysteine framework is IX (C-C-C-C-C-C).</text>
</comment>
<comment type="PTM">
    <text evidence="1">Contains 3 disulfide bonds.</text>
</comment>
<comment type="similarity">
    <text evidence="3">Belongs to the conopeptide P-like superfamily.</text>
</comment>
<organism>
    <name type="scientific">Iotyrris olangoensis</name>
    <name type="common">Sea snail</name>
    <name type="synonym">Lophiotoma olangoensis</name>
    <dbReference type="NCBI Taxonomy" id="2420066"/>
    <lineage>
        <taxon>Eukaryota</taxon>
        <taxon>Metazoa</taxon>
        <taxon>Spiralia</taxon>
        <taxon>Lophotrochozoa</taxon>
        <taxon>Mollusca</taxon>
        <taxon>Gastropoda</taxon>
        <taxon>Caenogastropoda</taxon>
        <taxon>Neogastropoda</taxon>
        <taxon>Conoidea</taxon>
        <taxon>Turridae</taxon>
        <taxon>Iotyrris</taxon>
    </lineage>
</organism>
<reference key="1">
    <citation type="journal article" date="2006" name="J. Mol. Evol.">
        <title>Genes expressed in a turrid venom duct: divergence and similarity to conotoxins.</title>
        <authorList>
            <person name="Watkins M."/>
            <person name="Hillyard D.R."/>
            <person name="Olivera B.M."/>
        </authorList>
    </citation>
    <scope>NUCLEOTIDE SEQUENCE [MRNA]</scope>
    <source>
        <tissue>Venom duct</tissue>
    </source>
</reference>
<sequence length="74" mass="8589">MKVPIVLMLVLLLIMPLSDGYERKRXXXVECNETCEEFCTYCDDNNAEETENCRTDQTDHSRCVDFYTANNLPT</sequence>
<dbReference type="GO" id="GO:0005576">
    <property type="term" value="C:extracellular region"/>
    <property type="evidence" value="ECO:0007669"/>
    <property type="project" value="UniProtKB-SubCell"/>
</dbReference>
<dbReference type="GO" id="GO:0099106">
    <property type="term" value="F:ion channel regulator activity"/>
    <property type="evidence" value="ECO:0007669"/>
    <property type="project" value="UniProtKB-KW"/>
</dbReference>
<dbReference type="GO" id="GO:0090729">
    <property type="term" value="F:toxin activity"/>
    <property type="evidence" value="ECO:0007669"/>
    <property type="project" value="UniProtKB-KW"/>
</dbReference>